<accession>P25651</accession>
<accession>D6VR86</accession>
<keyword id="KW-0002">3D-structure</keyword>
<keyword id="KW-0137">Centromere</keyword>
<keyword id="KW-0158">Chromosome</keyword>
<keyword id="KW-0175">Coiled coil</keyword>
<keyword id="KW-0469">Meiosis</keyword>
<keyword id="KW-0539">Nucleus</keyword>
<keyword id="KW-1185">Reference proteome</keyword>
<dbReference type="EMBL" id="X59720">
    <property type="protein sequence ID" value="CAA42261.1"/>
    <property type="molecule type" value="Genomic_DNA"/>
</dbReference>
<dbReference type="EMBL" id="AY558153">
    <property type="protein sequence ID" value="AAS56479.1"/>
    <property type="molecule type" value="Genomic_DNA"/>
</dbReference>
<dbReference type="EMBL" id="BK006937">
    <property type="protein sequence ID" value="DAA07555.1"/>
    <property type="molecule type" value="Genomic_DNA"/>
</dbReference>
<dbReference type="PIR" id="S19501">
    <property type="entry name" value="S19501"/>
</dbReference>
<dbReference type="RefSeq" id="NP_010009.1">
    <property type="nucleotide sequence ID" value="NM_001178792.1"/>
</dbReference>
<dbReference type="PDB" id="3N4R">
    <property type="method" value="X-ray"/>
    <property type="resolution" value="2.60 A"/>
    <property type="chains" value="A/B/C/D=69-181"/>
</dbReference>
<dbReference type="PDB" id="3N4S">
    <property type="method" value="X-ray"/>
    <property type="resolution" value="2.35 A"/>
    <property type="chains" value="A/B/C/D=69-181"/>
</dbReference>
<dbReference type="PDB" id="3N4X">
    <property type="method" value="X-ray"/>
    <property type="resolution" value="3.41 A"/>
    <property type="chains" value="A/B/C/D=1-190"/>
</dbReference>
<dbReference type="PDB" id="3N7N">
    <property type="method" value="X-ray"/>
    <property type="resolution" value="3.90 A"/>
    <property type="chains" value="A/B/C/D=1-190"/>
</dbReference>
<dbReference type="PDB" id="5KTB">
    <property type="method" value="X-ray"/>
    <property type="resolution" value="3.05 A"/>
    <property type="chains" value="A/B=1-190"/>
</dbReference>
<dbReference type="PDB" id="5V1A">
    <property type="method" value="X-ray"/>
    <property type="resolution" value="2.14 A"/>
    <property type="chains" value="A=69-190"/>
</dbReference>
<dbReference type="PDB" id="5V3N">
    <property type="method" value="X-ray"/>
    <property type="resolution" value="1.30 A"/>
    <property type="chains" value="A=69-181"/>
</dbReference>
<dbReference type="PDB" id="6DEI">
    <property type="method" value="X-ray"/>
    <property type="resolution" value="1.70 A"/>
    <property type="chains" value="A/B=69-181"/>
</dbReference>
<dbReference type="PDBsum" id="3N4R"/>
<dbReference type="PDBsum" id="3N4S"/>
<dbReference type="PDBsum" id="3N4X"/>
<dbReference type="PDBsum" id="3N7N"/>
<dbReference type="PDBsum" id="5KTB"/>
<dbReference type="PDBsum" id="5V1A"/>
<dbReference type="PDBsum" id="5V3N"/>
<dbReference type="PDBsum" id="6DEI"/>
<dbReference type="SMR" id="P25651"/>
<dbReference type="BioGRID" id="31058">
    <property type="interactions" value="473"/>
</dbReference>
<dbReference type="ComplexPortal" id="CPX-1681">
    <property type="entry name" value="Monopolin complex"/>
</dbReference>
<dbReference type="DIP" id="DIP-1283N"/>
<dbReference type="FunCoup" id="P25651">
    <property type="interactions" value="252"/>
</dbReference>
<dbReference type="IntAct" id="P25651">
    <property type="interactions" value="55"/>
</dbReference>
<dbReference type="MINT" id="P25651"/>
<dbReference type="STRING" id="4932.YCR086W"/>
<dbReference type="iPTMnet" id="P25651"/>
<dbReference type="PaxDb" id="4932-YCR086W"/>
<dbReference type="PeptideAtlas" id="P25651"/>
<dbReference type="EnsemblFungi" id="YCR086W_mRNA">
    <property type="protein sequence ID" value="YCR086W"/>
    <property type="gene ID" value="YCR086W"/>
</dbReference>
<dbReference type="GeneID" id="850447"/>
<dbReference type="KEGG" id="sce:YCR086W"/>
<dbReference type="AGR" id="SGD:S000000682"/>
<dbReference type="SGD" id="S000000682">
    <property type="gene designation" value="CSM1"/>
</dbReference>
<dbReference type="VEuPathDB" id="FungiDB:YCR086W"/>
<dbReference type="eggNOG" id="ENOG502RZY3">
    <property type="taxonomic scope" value="Eukaryota"/>
</dbReference>
<dbReference type="HOGENOM" id="CLU_100702_0_0_1"/>
<dbReference type="InParanoid" id="P25651"/>
<dbReference type="OMA" id="GLWFDTS"/>
<dbReference type="OrthoDB" id="2431049at2759"/>
<dbReference type="BioCyc" id="YEAST:G3O-29381-MONOMER"/>
<dbReference type="BioGRID-ORCS" id="850447">
    <property type="hits" value="3 hits in 10 CRISPR screens"/>
</dbReference>
<dbReference type="EvolutionaryTrace" id="P25651"/>
<dbReference type="PRO" id="PR:P25651"/>
<dbReference type="Proteomes" id="UP000002311">
    <property type="component" value="Chromosome III"/>
</dbReference>
<dbReference type="RNAct" id="P25651">
    <property type="molecule type" value="protein"/>
</dbReference>
<dbReference type="GO" id="GO:0034506">
    <property type="term" value="C:chromosome, centromeric core domain"/>
    <property type="evidence" value="ECO:0000318"/>
    <property type="project" value="GO_Central"/>
</dbReference>
<dbReference type="GO" id="GO:0072686">
    <property type="term" value="C:mitotic spindle"/>
    <property type="evidence" value="ECO:0000318"/>
    <property type="project" value="GO_Central"/>
</dbReference>
<dbReference type="GO" id="GO:0033551">
    <property type="term" value="C:monopolin complex"/>
    <property type="evidence" value="ECO:0000314"/>
    <property type="project" value="SGD"/>
</dbReference>
<dbReference type="GO" id="GO:0005635">
    <property type="term" value="C:nuclear envelope"/>
    <property type="evidence" value="ECO:0000314"/>
    <property type="project" value="SGD"/>
</dbReference>
<dbReference type="GO" id="GO:0005730">
    <property type="term" value="C:nucleolus"/>
    <property type="evidence" value="ECO:0000314"/>
    <property type="project" value="SGD"/>
</dbReference>
<dbReference type="GO" id="GO:0042802">
    <property type="term" value="F:identical protein binding"/>
    <property type="evidence" value="ECO:0000353"/>
    <property type="project" value="IntAct"/>
</dbReference>
<dbReference type="GO" id="GO:1990644">
    <property type="term" value="F:microtubule site clamp"/>
    <property type="evidence" value="ECO:0000318"/>
    <property type="project" value="GO_Central"/>
</dbReference>
<dbReference type="GO" id="GO:0051315">
    <property type="term" value="P:attachment of mitotic spindle microtubules to kinetochore"/>
    <property type="evidence" value="ECO:0000318"/>
    <property type="project" value="GO_Central"/>
</dbReference>
<dbReference type="GO" id="GO:0045143">
    <property type="term" value="P:homologous chromosome segregation"/>
    <property type="evidence" value="ECO:0000315"/>
    <property type="project" value="SGD"/>
</dbReference>
<dbReference type="GO" id="GO:0045132">
    <property type="term" value="P:meiotic chromosome segregation"/>
    <property type="evidence" value="ECO:0000315"/>
    <property type="project" value="SGD"/>
</dbReference>
<dbReference type="GO" id="GO:0051754">
    <property type="term" value="P:meiotic sister chromatid cohesion, centromeric"/>
    <property type="evidence" value="ECO:0000315"/>
    <property type="project" value="UniProtKB"/>
</dbReference>
<dbReference type="GO" id="GO:0045144">
    <property type="term" value="P:meiotic sister chromatid segregation"/>
    <property type="evidence" value="ECO:0000318"/>
    <property type="project" value="GO_Central"/>
</dbReference>
<dbReference type="GO" id="GO:0034503">
    <property type="term" value="P:protein localization to nucleolar rDNA repeats"/>
    <property type="evidence" value="ECO:0000315"/>
    <property type="project" value="SGD"/>
</dbReference>
<dbReference type="GO" id="GO:0070550">
    <property type="term" value="P:rDNA chromatin condensation"/>
    <property type="evidence" value="ECO:0000315"/>
    <property type="project" value="SGD"/>
</dbReference>
<dbReference type="GO" id="GO:0051455">
    <property type="term" value="P:spindle attachment to meiosis I kinetochore"/>
    <property type="evidence" value="ECO:0000316"/>
    <property type="project" value="SGD"/>
</dbReference>
<dbReference type="CDD" id="cd23787">
    <property type="entry name" value="RWD_CSM1"/>
    <property type="match status" value="1"/>
</dbReference>
<dbReference type="FunFam" id="3.90.1150.80:FF:000002">
    <property type="entry name" value="Monopolin complex subunit CSM1"/>
    <property type="match status" value="1"/>
</dbReference>
<dbReference type="Gene3D" id="1.20.5.340">
    <property type="match status" value="1"/>
</dbReference>
<dbReference type="Gene3D" id="3.90.1150.80">
    <property type="match status" value="1"/>
</dbReference>
<dbReference type="InterPro" id="IPR040349">
    <property type="entry name" value="Csm1/Pcs1"/>
</dbReference>
<dbReference type="InterPro" id="IPR020981">
    <property type="entry name" value="Csm1/Pcs1_C"/>
</dbReference>
<dbReference type="InterPro" id="IPR038608">
    <property type="entry name" value="Csm1/Pcs1_C_sf"/>
</dbReference>
<dbReference type="InterPro" id="IPR041671">
    <property type="entry name" value="Csm1_N"/>
</dbReference>
<dbReference type="PANTHER" id="PTHR28006">
    <property type="entry name" value="MONOPOLIN COMPLEX SUBUNIT CSM1"/>
    <property type="match status" value="1"/>
</dbReference>
<dbReference type="PANTHER" id="PTHR28006:SF1">
    <property type="entry name" value="MONOPOLIN COMPLEX SUBUNIT CSM1"/>
    <property type="match status" value="1"/>
</dbReference>
<dbReference type="Pfam" id="PF12539">
    <property type="entry name" value="Csm1"/>
    <property type="match status" value="1"/>
</dbReference>
<dbReference type="Pfam" id="PF18504">
    <property type="entry name" value="Csm1_N"/>
    <property type="match status" value="1"/>
</dbReference>
<gene>
    <name type="primary">CSM1</name>
    <name type="synonym">SPO86</name>
    <name type="ordered locus">YCR086W</name>
    <name type="ORF">YCR86W</name>
</gene>
<proteinExistence type="evidence at protein level"/>
<sequence length="190" mass="21751">MDPLTVYKNSVKQQIDSADLLVANLVNENFVLSEKLDTKATEIKQLQKQIDSLNAQVKELKTQTSQQAENSEVIKDLYEYLCNVRVHKSYEDDSGLWFDISQGTHSGGSSDDYSIMDYKLGFVKGQAQVTEVIYAPVLKQRSTEELYSLQSKLPEYLFETLSFPLSSLNQFYNKIAKSLNKKREKKDETE</sequence>
<organism>
    <name type="scientific">Saccharomyces cerevisiae (strain ATCC 204508 / S288c)</name>
    <name type="common">Baker's yeast</name>
    <dbReference type="NCBI Taxonomy" id="559292"/>
    <lineage>
        <taxon>Eukaryota</taxon>
        <taxon>Fungi</taxon>
        <taxon>Dikarya</taxon>
        <taxon>Ascomycota</taxon>
        <taxon>Saccharomycotina</taxon>
        <taxon>Saccharomycetes</taxon>
        <taxon>Saccharomycetales</taxon>
        <taxon>Saccharomycetaceae</taxon>
        <taxon>Saccharomyces</taxon>
    </lineage>
</organism>
<feature type="chain" id="PRO_0000202577" description="Monopolin complex subunit CSM1">
    <location>
        <begin position="1"/>
        <end position="190"/>
    </location>
</feature>
<feature type="coiled-coil region" evidence="1">
    <location>
        <begin position="31"/>
        <end position="70"/>
    </location>
</feature>
<feature type="helix" evidence="9">
    <location>
        <begin position="11"/>
        <end position="15"/>
    </location>
</feature>
<feature type="helix" evidence="10">
    <location>
        <begin position="71"/>
        <end position="82"/>
    </location>
</feature>
<feature type="strand" evidence="10">
    <location>
        <begin position="83"/>
        <end position="91"/>
    </location>
</feature>
<feature type="strand" evidence="10">
    <location>
        <begin position="96"/>
        <end position="104"/>
    </location>
</feature>
<feature type="strand" evidence="10">
    <location>
        <begin position="114"/>
        <end position="124"/>
    </location>
</feature>
<feature type="helix" evidence="10">
    <location>
        <begin position="126"/>
        <end position="128"/>
    </location>
</feature>
<feature type="strand" evidence="10">
    <location>
        <begin position="130"/>
        <end position="136"/>
    </location>
</feature>
<feature type="helix" evidence="11">
    <location>
        <begin position="138"/>
        <end position="140"/>
    </location>
</feature>
<feature type="helix" evidence="10">
    <location>
        <begin position="143"/>
        <end position="152"/>
    </location>
</feature>
<feature type="helix" evidence="10">
    <location>
        <begin position="155"/>
        <end position="158"/>
    </location>
</feature>
<feature type="strand" evidence="10">
    <location>
        <begin position="161"/>
        <end position="164"/>
    </location>
</feature>
<feature type="helix" evidence="10">
    <location>
        <begin position="165"/>
        <end position="167"/>
    </location>
</feature>
<feature type="helix" evidence="10">
    <location>
        <begin position="168"/>
        <end position="179"/>
    </location>
</feature>
<reference key="1">
    <citation type="journal article" date="1992" name="Nature">
        <title>The complete DNA sequence of yeast chromosome III.</title>
        <authorList>
            <person name="Oliver S.G."/>
            <person name="van der Aart Q.J.M."/>
            <person name="Agostoni-Carbone M.L."/>
            <person name="Aigle M."/>
            <person name="Alberghina L."/>
            <person name="Alexandraki D."/>
            <person name="Antoine G."/>
            <person name="Anwar R."/>
            <person name="Ballesta J.P.G."/>
            <person name="Benit P."/>
            <person name="Berben G."/>
            <person name="Bergantino E."/>
            <person name="Biteau N."/>
            <person name="Bolle P.-A."/>
            <person name="Bolotin-Fukuhara M."/>
            <person name="Brown A."/>
            <person name="Brown A.J.P."/>
            <person name="Buhler J.-M."/>
            <person name="Carcano C."/>
            <person name="Carignani G."/>
            <person name="Cederberg H."/>
            <person name="Chanet R."/>
            <person name="Contreras R."/>
            <person name="Crouzet M."/>
            <person name="Daignan-Fornier B."/>
            <person name="Defoor E."/>
            <person name="Delgado M.D."/>
            <person name="Demolder J."/>
            <person name="Doira C."/>
            <person name="Dubois E."/>
            <person name="Dujon B."/>
            <person name="Duesterhoeft A."/>
            <person name="Erdmann D."/>
            <person name="Esteban M."/>
            <person name="Fabre F."/>
            <person name="Fairhead C."/>
            <person name="Faye G."/>
            <person name="Feldmann H."/>
            <person name="Fiers W."/>
            <person name="Francingues-Gaillard M.-C."/>
            <person name="Franco L."/>
            <person name="Frontali L."/>
            <person name="Fukuhara H."/>
            <person name="Fuller L.J."/>
            <person name="Galland P."/>
            <person name="Gent M.E."/>
            <person name="Gigot D."/>
            <person name="Gilliquet V."/>
            <person name="Glansdorff N."/>
            <person name="Goffeau A."/>
            <person name="Grenson M."/>
            <person name="Grisanti P."/>
            <person name="Grivell L.A."/>
            <person name="de Haan M."/>
            <person name="Haasemann M."/>
            <person name="Hatat D."/>
            <person name="Hoenicka J."/>
            <person name="Hegemann J.H."/>
            <person name="Herbert C.J."/>
            <person name="Hilger F."/>
            <person name="Hohmann S."/>
            <person name="Hollenberg C.P."/>
            <person name="Huse K."/>
            <person name="Iborra F."/>
            <person name="Indge K.J."/>
            <person name="Isono K."/>
            <person name="Jacq C."/>
            <person name="Jacquet M."/>
            <person name="James C.M."/>
            <person name="Jauniaux J.-C."/>
            <person name="Jia Y."/>
            <person name="Jimenez A."/>
            <person name="Kelly A."/>
            <person name="Kleinhans U."/>
            <person name="Kreisl P."/>
            <person name="Lanfranchi G."/>
            <person name="Lewis C."/>
            <person name="van der Linden C.G."/>
            <person name="Lucchini G."/>
            <person name="Lutzenkirchen K."/>
            <person name="Maat M.J."/>
            <person name="Mallet L."/>
            <person name="Mannhaupt G."/>
            <person name="Martegani E."/>
            <person name="Mathieu A."/>
            <person name="Maurer C.T.C."/>
            <person name="McConnell D."/>
            <person name="McKee R.A."/>
            <person name="Messenguy F."/>
            <person name="Mewes H.-W."/>
            <person name="Molemans F."/>
            <person name="Montague M.A."/>
            <person name="Muzi Falconi M."/>
            <person name="Navas L."/>
            <person name="Newlon C.S."/>
            <person name="Noone D."/>
            <person name="Pallier C."/>
            <person name="Panzeri L."/>
            <person name="Pearson B.M."/>
            <person name="Perea J."/>
            <person name="Philippsen P."/>
            <person name="Pierard A."/>
            <person name="Planta R.J."/>
            <person name="Plevani P."/>
            <person name="Poetsch B."/>
            <person name="Pohl F.M."/>
            <person name="Purnelle B."/>
            <person name="Ramezani Rad M."/>
            <person name="Rasmussen S.W."/>
            <person name="Raynal A."/>
            <person name="Remacha M.A."/>
            <person name="Richterich P."/>
            <person name="Roberts A.B."/>
            <person name="Rodriguez F."/>
            <person name="Sanz E."/>
            <person name="Schaaff-Gerstenschlaeger I."/>
            <person name="Scherens B."/>
            <person name="Schweitzer B."/>
            <person name="Shu Y."/>
            <person name="Skala J."/>
            <person name="Slonimski P.P."/>
            <person name="Sor F."/>
            <person name="Soustelle C."/>
            <person name="Spiegelberg R."/>
            <person name="Stateva L.I."/>
            <person name="Steensma H.Y."/>
            <person name="Steiner S."/>
            <person name="Thierry A."/>
            <person name="Thireos G."/>
            <person name="Tzermia M."/>
            <person name="Urrestarazu L.A."/>
            <person name="Valle G."/>
            <person name="Vetter I."/>
            <person name="van Vliet-Reedijk J.C."/>
            <person name="Voet M."/>
            <person name="Volckaert G."/>
            <person name="Vreken P."/>
            <person name="Wang H."/>
            <person name="Warmington J.R."/>
            <person name="von Wettstein D."/>
            <person name="Wicksteed B.L."/>
            <person name="Wilson C."/>
            <person name="Wurst H."/>
            <person name="Xu G."/>
            <person name="Yoshikawa A."/>
            <person name="Zimmermann F.K."/>
            <person name="Sgouros J.G."/>
        </authorList>
    </citation>
    <scope>NUCLEOTIDE SEQUENCE [LARGE SCALE GENOMIC DNA]</scope>
    <source>
        <strain>ATCC 204508 / S288c</strain>
    </source>
</reference>
<reference key="2">
    <citation type="journal article" date="2014" name="G3 (Bethesda)">
        <title>The reference genome sequence of Saccharomyces cerevisiae: Then and now.</title>
        <authorList>
            <person name="Engel S.R."/>
            <person name="Dietrich F.S."/>
            <person name="Fisk D.G."/>
            <person name="Binkley G."/>
            <person name="Balakrishnan R."/>
            <person name="Costanzo M.C."/>
            <person name="Dwight S.S."/>
            <person name="Hitz B.C."/>
            <person name="Karra K."/>
            <person name="Nash R.S."/>
            <person name="Weng S."/>
            <person name="Wong E.D."/>
            <person name="Lloyd P."/>
            <person name="Skrzypek M.S."/>
            <person name="Miyasato S.R."/>
            <person name="Simison M."/>
            <person name="Cherry J.M."/>
        </authorList>
    </citation>
    <scope>GENOME REANNOTATION</scope>
    <source>
        <strain>ATCC 204508 / S288c</strain>
    </source>
</reference>
<reference key="3">
    <citation type="journal article" date="2007" name="Genome Res.">
        <title>Approaching a complete repository of sequence-verified protein-encoding clones for Saccharomyces cerevisiae.</title>
        <authorList>
            <person name="Hu Y."/>
            <person name="Rolfs A."/>
            <person name="Bhullar B."/>
            <person name="Murthy T.V.S."/>
            <person name="Zhu C."/>
            <person name="Berger M.F."/>
            <person name="Camargo A.A."/>
            <person name="Kelley F."/>
            <person name="McCarron S."/>
            <person name="Jepson D."/>
            <person name="Richardson A."/>
            <person name="Raphael J."/>
            <person name="Moreira D."/>
            <person name="Taycher E."/>
            <person name="Zuo D."/>
            <person name="Mohr S."/>
            <person name="Kane M.F."/>
            <person name="Williamson J."/>
            <person name="Simpson A.J.G."/>
            <person name="Bulyk M.L."/>
            <person name="Harlow E."/>
            <person name="Marsischky G."/>
            <person name="Kolodner R.D."/>
            <person name="LaBaer J."/>
        </authorList>
    </citation>
    <scope>NUCLEOTIDE SEQUENCE [GENOMIC DNA]</scope>
    <source>
        <strain>ATCC 204508 / S288c</strain>
    </source>
</reference>
<reference key="4">
    <citation type="journal article" date="2001" name="Curr. Biol.">
        <title>A screen for genes required for meiosis and spore formation based on whole-genome expression.</title>
        <authorList>
            <person name="Rabitsch K.P."/>
            <person name="Toth A."/>
            <person name="Galova M."/>
            <person name="Schleiffer A."/>
            <person name="Schaffner G."/>
            <person name="Aigner E."/>
            <person name="Rupp C."/>
            <person name="Penkner A.M."/>
            <person name="Moreno-Borchart A.C."/>
            <person name="Primig M."/>
            <person name="Esposito R.E."/>
            <person name="Klein F."/>
            <person name="Knop M."/>
            <person name="Nasmyth K."/>
        </authorList>
    </citation>
    <scope>FUNCTION</scope>
</reference>
<reference key="5">
    <citation type="journal article" date="2001" name="J. Cell Biol.">
        <title>A protein interaction map for cell polarity development.</title>
        <authorList>
            <person name="Drees B.L."/>
            <person name="Sundin B.A."/>
            <person name="Brazeau E."/>
            <person name="Caviston J.P."/>
            <person name="Chen G.-C."/>
            <person name="Guo W."/>
            <person name="Kozminski K.G."/>
            <person name="Lau M.W."/>
            <person name="Moskow J.J."/>
            <person name="Tong A."/>
            <person name="Schenkman L.R."/>
            <person name="McKenzie A. III"/>
            <person name="Brennwald P.J."/>
            <person name="Longtine M."/>
            <person name="Bi E."/>
            <person name="Chan C."/>
            <person name="Novick P."/>
            <person name="Boone C."/>
            <person name="Pringle J.R."/>
            <person name="Davis T.N."/>
            <person name="Fields S."/>
            <person name="Drubin D.G."/>
        </authorList>
    </citation>
    <scope>INTERACTION WITH GIC1 AND GIC2</scope>
    <scope>SUBCELLULAR LOCATION</scope>
</reference>
<reference key="6">
    <citation type="journal article" date="2003" name="Dev. Cell">
        <title>Kinetochore recruitment of two nucleolar proteins is required for homolog segregation in meiosis I.</title>
        <authorList>
            <person name="Rabitsch K.P."/>
            <person name="Petronczki M."/>
            <person name="Javerzat J.-P."/>
            <person name="Genier S."/>
            <person name="Chwalla B."/>
            <person name="Schleiffer A."/>
            <person name="Tanaka T.U."/>
            <person name="Nasmyth K."/>
        </authorList>
    </citation>
    <scope>FUNCTION</scope>
    <scope>SUBCELLULAR LOCATION</scope>
    <scope>IDENTIFICATION IN THE MONOPOLIN COMPLEX</scope>
</reference>
<reference key="7">
    <citation type="journal article" date="2003" name="Nature">
        <title>Global analysis of protein localization in budding yeast.</title>
        <authorList>
            <person name="Huh W.-K."/>
            <person name="Falvo J.V."/>
            <person name="Gerke L.C."/>
            <person name="Carroll A.S."/>
            <person name="Howson R.W."/>
            <person name="Weissman J.S."/>
            <person name="O'Shea E.K."/>
        </authorList>
    </citation>
    <scope>SUBCELLULAR LOCATION [LARGE SCALE ANALYSIS]</scope>
</reference>
<reference key="8">
    <citation type="journal article" date="2003" name="Nature">
        <title>Global analysis of protein expression in yeast.</title>
        <authorList>
            <person name="Ghaemmaghami S."/>
            <person name="Huh W.-K."/>
            <person name="Bower K."/>
            <person name="Howson R.W."/>
            <person name="Belle A."/>
            <person name="Dephoure N."/>
            <person name="O'Shea E.K."/>
            <person name="Weissman J.S."/>
        </authorList>
    </citation>
    <scope>LEVEL OF PROTEIN EXPRESSION [LARGE SCALE ANALYSIS]</scope>
</reference>
<reference key="9">
    <citation type="journal article" date="2004" name="Exp. Cell Res.">
        <title>Saccharomyces cerevisiae CSM1 gene encoding a protein influencing chromosome segregation in meiosis I interacts with elements of the DNA replication complex.</title>
        <authorList>
            <person name="Wysocka M."/>
            <person name="Rytka J."/>
            <person name="Kurlandzka A."/>
        </authorList>
    </citation>
    <scope>FUNCTION</scope>
    <scope>SUBCELLULAR LOCATION</scope>
    <scope>INTERACTION WITH CDC46; CDC47 AND MCM3</scope>
</reference>
<reference key="10">
    <citation type="journal article" date="2006" name="Cell">
        <title>A DNA integrity network in the yeast Saccharomyces cerevisiae.</title>
        <authorList>
            <person name="Pan X."/>
            <person name="Ye P."/>
            <person name="Yuan D.S."/>
            <person name="Wang X."/>
            <person name="Bader J.S."/>
            <person name="Boeke J.D."/>
        </authorList>
    </citation>
    <scope>FUNCTION</scope>
</reference>
<reference key="11">
    <citation type="journal article" date="2008" name="Nature">
        <title>Role for perinuclear chromosome tethering in maintenance of genome stability.</title>
        <authorList>
            <person name="Mekhail K."/>
            <person name="Seebacher J."/>
            <person name="Gygi S.P."/>
            <person name="Moazed D."/>
        </authorList>
    </citation>
    <scope>FUNCTION</scope>
    <scope>INTERACTION WITH NUR1</scope>
</reference>
<protein>
    <recommendedName>
        <fullName>Monopolin complex subunit CSM1</fullName>
    </recommendedName>
    <alternativeName>
        <fullName>Chromosome segregation in meiosis protein 1</fullName>
    </alternativeName>
</protein>
<evidence type="ECO:0000255" key="1"/>
<evidence type="ECO:0000269" key="2">
    <source>
    </source>
</evidence>
<evidence type="ECO:0000269" key="3">
    <source>
    </source>
</evidence>
<evidence type="ECO:0000269" key="4">
    <source>
    </source>
</evidence>
<evidence type="ECO:0000269" key="5">
    <source>
    </source>
</evidence>
<evidence type="ECO:0000269" key="6">
    <source>
    </source>
</evidence>
<evidence type="ECO:0000269" key="7">
    <source>
    </source>
</evidence>
<evidence type="ECO:0000269" key="8">
    <source>
    </source>
</evidence>
<evidence type="ECO:0007829" key="9">
    <source>
        <dbReference type="PDB" id="3N4X"/>
    </source>
</evidence>
<evidence type="ECO:0007829" key="10">
    <source>
        <dbReference type="PDB" id="5V3N"/>
    </source>
</evidence>
<evidence type="ECO:0007829" key="11">
    <source>
        <dbReference type="PDB" id="6DEI"/>
    </source>
</evidence>
<comment type="function">
    <text evidence="2 4 6 7 8">Component of the monopolin complex which promotes monoorientation during meiosis I, required for chromosome segregation during meiosis. Also plays a mitotic role in DNA replication.</text>
</comment>
<comment type="subunit">
    <text evidence="3 4 6 8">Component of the monopolin complex composed of at least CSM1, LRS4 and MAM1. The complex associates with the kinetochore. Interacts with CDC46, CDC47, GIC1, GIC2, MCM3 and NUR1.</text>
</comment>
<comment type="interaction">
    <interactant intactId="EBI-22001">
        <id>P25651</id>
    </interactant>
    <interactant intactId="EBI-22001">
        <id>P25651</id>
        <label>CSM1</label>
    </interactant>
    <organismsDiffer>false</organismsDiffer>
    <experiments>3</experiments>
</comment>
<comment type="interaction">
    <interactant intactId="EBI-22001">
        <id>P25651</id>
    </interactant>
    <interactant intactId="EBI-25398">
        <id>P40568</id>
        <label>DSN1</label>
    </interactant>
    <organismsDiffer>false</organismsDiffer>
    <experiments>3</experiments>
</comment>
<comment type="interaction">
    <interactant intactId="EBI-22001">
        <id>P25651</id>
    </interactant>
    <interactant intactId="EBI-32189">
        <id>Q04087</id>
        <label>LRS4</label>
    </interactant>
    <organismsDiffer>false</organismsDiffer>
    <experiments>16</experiments>
</comment>
<comment type="interaction">
    <interactant intactId="EBI-22001">
        <id>P25651</id>
    </interactant>
    <interactant intactId="EBI-22643">
        <id>P40065</id>
        <label>MAM1</label>
    </interactant>
    <organismsDiffer>false</organismsDiffer>
    <experiments>7</experiments>
</comment>
<comment type="interaction">
    <interactant intactId="EBI-22001">
        <id>P25651</id>
    </interactant>
    <interactant intactId="EBI-10541">
        <id>P24279</id>
        <label>MCM3</label>
    </interactant>
    <organismsDiffer>false</organismsDiffer>
    <experiments>2</experiments>
</comment>
<comment type="interaction">
    <interactant intactId="EBI-22001">
        <id>P25651</id>
    </interactant>
    <interactant intactId="EBI-10549">
        <id>P29496</id>
        <label>MCM5</label>
    </interactant>
    <organismsDiffer>false</organismsDiffer>
    <experiments>2</experiments>
</comment>
<comment type="interaction">
    <interactant intactId="EBI-22001">
        <id>P25651</id>
    </interactant>
    <interactant intactId="EBI-4300">
        <id>P38132</id>
        <label>MCM7</label>
    </interactant>
    <organismsDiffer>false</organismsDiffer>
    <experiments>3</experiments>
</comment>
<comment type="interaction">
    <interactant intactId="EBI-22001">
        <id>P25651</id>
    </interactant>
    <interactant intactId="EBI-27048">
        <id>Q02208</id>
        <label>TOF2</label>
    </interactant>
    <organismsDiffer>false</organismsDiffer>
    <experiments>4</experiments>
</comment>
<comment type="subcellular location">
    <subcellularLocation>
        <location>Nucleus</location>
        <location>Nucleolus</location>
    </subcellularLocation>
    <subcellularLocation>
        <location>Chromosome</location>
        <location>Centromere</location>
    </subcellularLocation>
    <text>Transiently released from the nucleolus and localizes to the centromere regions during late pachytene.</text>
</comment>
<comment type="miscellaneous">
    <text evidence="5">Present with 1920 molecules/cell in log phase SD medium.</text>
</comment>
<name>CSM1_YEAST</name>